<keyword id="KW-1185">Reference proteome</keyword>
<organism>
    <name type="scientific">Bacillus subtilis (strain 168)</name>
    <dbReference type="NCBI Taxonomy" id="224308"/>
    <lineage>
        <taxon>Bacteria</taxon>
        <taxon>Bacillati</taxon>
        <taxon>Bacillota</taxon>
        <taxon>Bacilli</taxon>
        <taxon>Bacillales</taxon>
        <taxon>Bacillaceae</taxon>
        <taxon>Bacillus</taxon>
    </lineage>
</organism>
<sequence length="87" mass="9545">MRLSEAIKHLAVRAVDSESPVDILPAEVVSVSPVEIRLNENDKLIIPADLIIVPKRLRAGEEALNTGERVMIVSLKGGQSFFILDKI</sequence>
<accession>P45933</accession>
<comment type="similarity">
    <text evidence="1">To B.subtilis XkdR.</text>
</comment>
<name>YQBR_BACSU</name>
<feature type="chain" id="PRO_0000049769" description="Uncharacterized protein YqbR">
    <location>
        <begin position="1"/>
        <end position="87"/>
    </location>
</feature>
<evidence type="ECO:0000305" key="1"/>
<reference key="1">
    <citation type="journal article" date="1995" name="Microbiology">
        <title>Complete nucleotide sequence of a skin element excised by DNA rearrangement during sporulation in Bacillus subtilis.</title>
        <authorList>
            <person name="Takemaru K."/>
            <person name="Mizuno M."/>
            <person name="Sato T."/>
            <person name="Takeuchi M."/>
            <person name="Kobayashi Y."/>
        </authorList>
    </citation>
    <scope>NUCLEOTIDE SEQUENCE [GENOMIC DNA]</scope>
    <source>
        <strain>168 / JH642</strain>
    </source>
</reference>
<reference key="2">
    <citation type="journal article" date="1996" name="Microbiology">
        <title>Systematic sequencing of the 283 kb 210 degrees-232 degrees region of the Bacillus subtilis genome containing the skin element and many sporulation genes.</title>
        <authorList>
            <person name="Mizuno M."/>
            <person name="Masuda S."/>
            <person name="Takemaru K."/>
            <person name="Hosono S."/>
            <person name="Sato T."/>
            <person name="Takeuchi M."/>
            <person name="Kobayashi Y."/>
        </authorList>
    </citation>
    <scope>NUCLEOTIDE SEQUENCE [GENOMIC DNA]</scope>
    <source>
        <strain>168 / JH642</strain>
    </source>
</reference>
<reference key="3">
    <citation type="journal article" date="1997" name="Nature">
        <title>The complete genome sequence of the Gram-positive bacterium Bacillus subtilis.</title>
        <authorList>
            <person name="Kunst F."/>
            <person name="Ogasawara N."/>
            <person name="Moszer I."/>
            <person name="Albertini A.M."/>
            <person name="Alloni G."/>
            <person name="Azevedo V."/>
            <person name="Bertero M.G."/>
            <person name="Bessieres P."/>
            <person name="Bolotin A."/>
            <person name="Borchert S."/>
            <person name="Borriss R."/>
            <person name="Boursier L."/>
            <person name="Brans A."/>
            <person name="Braun M."/>
            <person name="Brignell S.C."/>
            <person name="Bron S."/>
            <person name="Brouillet S."/>
            <person name="Bruschi C.V."/>
            <person name="Caldwell B."/>
            <person name="Capuano V."/>
            <person name="Carter N.M."/>
            <person name="Choi S.-K."/>
            <person name="Codani J.-J."/>
            <person name="Connerton I.F."/>
            <person name="Cummings N.J."/>
            <person name="Daniel R.A."/>
            <person name="Denizot F."/>
            <person name="Devine K.M."/>
            <person name="Duesterhoeft A."/>
            <person name="Ehrlich S.D."/>
            <person name="Emmerson P.T."/>
            <person name="Entian K.-D."/>
            <person name="Errington J."/>
            <person name="Fabret C."/>
            <person name="Ferrari E."/>
            <person name="Foulger D."/>
            <person name="Fritz C."/>
            <person name="Fujita M."/>
            <person name="Fujita Y."/>
            <person name="Fuma S."/>
            <person name="Galizzi A."/>
            <person name="Galleron N."/>
            <person name="Ghim S.-Y."/>
            <person name="Glaser P."/>
            <person name="Goffeau A."/>
            <person name="Golightly E.J."/>
            <person name="Grandi G."/>
            <person name="Guiseppi G."/>
            <person name="Guy B.J."/>
            <person name="Haga K."/>
            <person name="Haiech J."/>
            <person name="Harwood C.R."/>
            <person name="Henaut A."/>
            <person name="Hilbert H."/>
            <person name="Holsappel S."/>
            <person name="Hosono S."/>
            <person name="Hullo M.-F."/>
            <person name="Itaya M."/>
            <person name="Jones L.-M."/>
            <person name="Joris B."/>
            <person name="Karamata D."/>
            <person name="Kasahara Y."/>
            <person name="Klaerr-Blanchard M."/>
            <person name="Klein C."/>
            <person name="Kobayashi Y."/>
            <person name="Koetter P."/>
            <person name="Koningstein G."/>
            <person name="Krogh S."/>
            <person name="Kumano M."/>
            <person name="Kurita K."/>
            <person name="Lapidus A."/>
            <person name="Lardinois S."/>
            <person name="Lauber J."/>
            <person name="Lazarevic V."/>
            <person name="Lee S.-M."/>
            <person name="Levine A."/>
            <person name="Liu H."/>
            <person name="Masuda S."/>
            <person name="Mauel C."/>
            <person name="Medigue C."/>
            <person name="Medina N."/>
            <person name="Mellado R.P."/>
            <person name="Mizuno M."/>
            <person name="Moestl D."/>
            <person name="Nakai S."/>
            <person name="Noback M."/>
            <person name="Noone D."/>
            <person name="O'Reilly M."/>
            <person name="Ogawa K."/>
            <person name="Ogiwara A."/>
            <person name="Oudega B."/>
            <person name="Park S.-H."/>
            <person name="Parro V."/>
            <person name="Pohl T.M."/>
            <person name="Portetelle D."/>
            <person name="Porwollik S."/>
            <person name="Prescott A.M."/>
            <person name="Presecan E."/>
            <person name="Pujic P."/>
            <person name="Purnelle B."/>
            <person name="Rapoport G."/>
            <person name="Rey M."/>
            <person name="Reynolds S."/>
            <person name="Rieger M."/>
            <person name="Rivolta C."/>
            <person name="Rocha E."/>
            <person name="Roche B."/>
            <person name="Rose M."/>
            <person name="Sadaie Y."/>
            <person name="Sato T."/>
            <person name="Scanlan E."/>
            <person name="Schleich S."/>
            <person name="Schroeter R."/>
            <person name="Scoffone F."/>
            <person name="Sekiguchi J."/>
            <person name="Sekowska A."/>
            <person name="Seror S.J."/>
            <person name="Serror P."/>
            <person name="Shin B.-S."/>
            <person name="Soldo B."/>
            <person name="Sorokin A."/>
            <person name="Tacconi E."/>
            <person name="Takagi T."/>
            <person name="Takahashi H."/>
            <person name="Takemaru K."/>
            <person name="Takeuchi M."/>
            <person name="Tamakoshi A."/>
            <person name="Tanaka T."/>
            <person name="Terpstra P."/>
            <person name="Tognoni A."/>
            <person name="Tosato V."/>
            <person name="Uchiyama S."/>
            <person name="Vandenbol M."/>
            <person name="Vannier F."/>
            <person name="Vassarotti A."/>
            <person name="Viari A."/>
            <person name="Wambutt R."/>
            <person name="Wedler E."/>
            <person name="Wedler H."/>
            <person name="Weitzenegger T."/>
            <person name="Winters P."/>
            <person name="Wipat A."/>
            <person name="Yamamoto H."/>
            <person name="Yamane K."/>
            <person name="Yasumoto K."/>
            <person name="Yata K."/>
            <person name="Yoshida K."/>
            <person name="Yoshikawa H.-F."/>
            <person name="Zumstein E."/>
            <person name="Yoshikawa H."/>
            <person name="Danchin A."/>
        </authorList>
    </citation>
    <scope>NUCLEOTIDE SEQUENCE [LARGE SCALE GENOMIC DNA]</scope>
    <source>
        <strain>168</strain>
    </source>
</reference>
<reference key="4">
    <citation type="journal article" date="1995" name="Gene">
        <title>Analysis of a Bacillus subtilis genome fragment using a co-operative computer system prototype.</title>
        <authorList>
            <person name="Medigue C."/>
            <person name="Moszer I."/>
            <person name="Viari A."/>
            <person name="Danchin A."/>
        </authorList>
    </citation>
    <scope>IDENTIFICATION</scope>
</reference>
<proteinExistence type="predicted"/>
<dbReference type="EMBL" id="D32216">
    <property type="protein sequence ID" value="BAA06950.1"/>
    <property type="molecule type" value="Genomic_DNA"/>
</dbReference>
<dbReference type="EMBL" id="D84432">
    <property type="protein sequence ID" value="BAA12414.1"/>
    <property type="molecule type" value="Genomic_DNA"/>
</dbReference>
<dbReference type="EMBL" id="AL009126">
    <property type="protein sequence ID" value="CAB14541.1"/>
    <property type="molecule type" value="Genomic_DNA"/>
</dbReference>
<dbReference type="PIR" id="E69948">
    <property type="entry name" value="E69948"/>
</dbReference>
<dbReference type="RefSeq" id="NP_390477.1">
    <property type="nucleotide sequence ID" value="NC_000964.3"/>
</dbReference>
<dbReference type="RefSeq" id="WP_003229938.1">
    <property type="nucleotide sequence ID" value="NZ_OZ025638.1"/>
</dbReference>
<dbReference type="SMR" id="P45933"/>
<dbReference type="FunCoup" id="P45933">
    <property type="interactions" value="44"/>
</dbReference>
<dbReference type="STRING" id="224308.BSU26000"/>
<dbReference type="PaxDb" id="224308-BSU26000"/>
<dbReference type="EnsemblBacteria" id="CAB14541">
    <property type="protein sequence ID" value="CAB14541"/>
    <property type="gene ID" value="BSU_26000"/>
</dbReference>
<dbReference type="GeneID" id="937750"/>
<dbReference type="KEGG" id="bsu:BSU26000"/>
<dbReference type="PATRIC" id="fig|224308.179.peg.2825"/>
<dbReference type="eggNOG" id="ENOG5030CVT">
    <property type="taxonomic scope" value="Bacteria"/>
</dbReference>
<dbReference type="InParanoid" id="P45933"/>
<dbReference type="OrthoDB" id="95576at2"/>
<dbReference type="BioCyc" id="BSUB:BSU26000-MONOMER"/>
<dbReference type="Proteomes" id="UP000001570">
    <property type="component" value="Chromosome"/>
</dbReference>
<dbReference type="InterPro" id="IPR022555">
    <property type="entry name" value="DUF2577"/>
</dbReference>
<dbReference type="Pfam" id="PF10844">
    <property type="entry name" value="DUF2577"/>
    <property type="match status" value="1"/>
</dbReference>
<gene>
    <name type="primary">yqbR</name>
    <name type="ordered locus">BSU26000</name>
</gene>
<protein>
    <recommendedName>
        <fullName>Uncharacterized protein YqbR</fullName>
    </recommendedName>
</protein>